<comment type="function">
    <text evidence="2">RNA-binding factor that recruits target transcripts to cytoplasmic protein-RNA complexes (mRNPs). This transcript 'caging' into mRNPs allows mRNA transport and transient storage. It also modulates the rate and location at which target transcripts encounter the translational apparatus and shields them from endonuclease attacks or microRNA-mediated degradation. Preferentially binds to N6-methyladenosine (m6A)-containing mRNAs and increases their stability (By similarity). Plays a direct role in the transport and translation of transcripts required for axonal regeneration in adult sensory neurons (By similarity). Regulates localized beta-actin/ACTB mRNA translation in polarized cells, a crucial process for cell migration and neurite outgrowth. Promotes the directed movement of cells by fine-tuning intracellular signaling networks and enhances the velocity of cell migration (By similarity).</text>
</comment>
<comment type="subunit">
    <text evidence="1">Component of the CRD-mediated complex.</text>
</comment>
<comment type="subcellular location">
    <subcellularLocation>
        <location evidence="1">Nucleus</location>
    </subcellularLocation>
    <subcellularLocation>
        <location evidence="1">Cytoplasm</location>
    </subcellularLocation>
    <subcellularLocation>
        <location evidence="1">Cytoplasm</location>
        <location evidence="1">Perinuclear region</location>
    </subcellularLocation>
    <subcellularLocation>
        <location evidence="2">Cytoplasm</location>
        <location evidence="2">P-body</location>
    </subcellularLocation>
    <subcellularLocation>
        <location evidence="2">Cytoplasm</location>
        <location evidence="2">Stress granule</location>
    </subcellularLocation>
    <subcellularLocation>
        <location evidence="1">Cell projection</location>
        <location evidence="1">Growth cone</location>
    </subcellularLocation>
    <subcellularLocation>
        <location evidence="1">Cell projection</location>
        <location evidence="1">Filopodium</location>
    </subcellularLocation>
    <subcellularLocation>
        <location evidence="1">Cell projection</location>
        <location evidence="1">Lamellipodium</location>
    </subcellularLocation>
</comment>
<comment type="domain">
    <text evidence="2">Domains KH3 and KH4 are the major RNA-binding modules, although KH1 and KH2 may also contribute to transcript binding. KH1 and KH2, and possibly KH3 and KH4, promote the formation of higher ordered protein-RNA complexes, which may be essential for IGF2BP1 cytoplasmic retention. KH domains are required for localization to stress granules. KH3 and KH4 mediate association with the cytoskeleton. Two nuclear export signals (NES) have been identified in KH2 and KH4 domains, respectively. Only KH2 NES is XPO1-dependent. Both NES may be redundant.</text>
</comment>
<comment type="similarity">
    <text evidence="7">Belongs to the RRM IMP/VICKZ family.</text>
</comment>
<name>IF2B1_DANRE</name>
<sequence length="598" mass="65530">MNKLYIGNLNEKVTAEDLVKTFEDYKIPYSGQFLMKTGYASVDCPDDQWAMKAIETFSGKVELHGKRIEVEHSVPKKQRTRKLQIRNIPPHLQWEVLDGLLAQYGTVENCEQVNTDSETAVVNVTYGTREQARQAIQKLNGYQFDNNALRVSYIPDENSEVDSQRGPDNGRRPGYGPRGTSRQMSPGSGIPSKHQHADIPLRLLVPTQYVGAIIGKEGATIRNITKQTQSKIDVHRKENAGAAEKPISIHSTPEGCSAACRMILEIMNQEAKDTKTADEVPLKVLAHNNFVGRLIGKEGRNLKKVEQDTDTKITISPLQDLTLYNPERTITVKGSIEACCLAEQEIMKKVREAYDNDIAAMNQQTHLIPGLNLGAIGLFPPSSAMPPPALGNSVPGPPYGPMGASEQETVHVYIPAQAVGALIGKKGQHIKQLSRFAGASIKIAPAEAPDSKMRMVIVTGPPEAQFKAQGRIYGKLKEENFFGPKEEVKLETHIKVAAAAAGRVIGKGGKTVNELQNLTAAEVVVPREQTPDEHDQVIVKIIGHFYASQLAQRKIRDILTQVKQQQKGGGMGTPQGPHPQGMTELGSPQGLAQEPRRK</sequence>
<evidence type="ECO:0000250" key="1"/>
<evidence type="ECO:0000250" key="2">
    <source>
        <dbReference type="UniProtKB" id="Q9NZI8"/>
    </source>
</evidence>
<evidence type="ECO:0000255" key="3">
    <source>
        <dbReference type="PROSITE-ProRule" id="PRU00117"/>
    </source>
</evidence>
<evidence type="ECO:0000255" key="4">
    <source>
        <dbReference type="PROSITE-ProRule" id="PRU00176"/>
    </source>
</evidence>
<evidence type="ECO:0000256" key="5">
    <source>
        <dbReference type="SAM" id="MobiDB-lite"/>
    </source>
</evidence>
<evidence type="ECO:0000269" key="6">
    <source>
    </source>
</evidence>
<evidence type="ECO:0000305" key="7"/>
<accession>Q08CK7</accession>
<gene>
    <name type="primary">igf2bp1</name>
    <name type="synonym">vickz1</name>
    <name type="ORF">zgc:152963</name>
</gene>
<dbReference type="EMBL" id="BC124196">
    <property type="protein sequence ID" value="AAI24197.1"/>
    <property type="molecule type" value="mRNA"/>
</dbReference>
<dbReference type="SMR" id="Q08CK7"/>
<dbReference type="FunCoup" id="Q08CK7">
    <property type="interactions" value="846"/>
</dbReference>
<dbReference type="STRING" id="7955.ENSDARP00000082159"/>
<dbReference type="iPTMnet" id="Q08CK7"/>
<dbReference type="PaxDb" id="7955-ENSDARP00000082159"/>
<dbReference type="AGR" id="ZFIN:ZDB-GENE-060929-1258"/>
<dbReference type="ZFIN" id="ZDB-GENE-060929-1258">
    <property type="gene designation" value="igf2bp1"/>
</dbReference>
<dbReference type="eggNOG" id="KOG2193">
    <property type="taxonomic scope" value="Eukaryota"/>
</dbReference>
<dbReference type="InParanoid" id="Q08CK7"/>
<dbReference type="PhylomeDB" id="Q08CK7"/>
<dbReference type="PRO" id="PR:Q08CK7"/>
<dbReference type="Proteomes" id="UP000000437">
    <property type="component" value="Unplaced"/>
</dbReference>
<dbReference type="GO" id="GO:0070937">
    <property type="term" value="C:CRD-mediated mRNA stability complex"/>
    <property type="evidence" value="ECO:0000250"/>
    <property type="project" value="UniProtKB"/>
</dbReference>
<dbReference type="GO" id="GO:0005737">
    <property type="term" value="C:cytoplasm"/>
    <property type="evidence" value="ECO:0000318"/>
    <property type="project" value="GO_Central"/>
</dbReference>
<dbReference type="GO" id="GO:0010494">
    <property type="term" value="C:cytoplasmic stress granule"/>
    <property type="evidence" value="ECO:0000250"/>
    <property type="project" value="UniProtKB"/>
</dbReference>
<dbReference type="GO" id="GO:0005829">
    <property type="term" value="C:cytosol"/>
    <property type="evidence" value="ECO:0000318"/>
    <property type="project" value="GO_Central"/>
</dbReference>
<dbReference type="GO" id="GO:0030175">
    <property type="term" value="C:filopodium"/>
    <property type="evidence" value="ECO:0007669"/>
    <property type="project" value="UniProtKB-SubCell"/>
</dbReference>
<dbReference type="GO" id="GO:0030426">
    <property type="term" value="C:growth cone"/>
    <property type="evidence" value="ECO:0007669"/>
    <property type="project" value="UniProtKB-SubCell"/>
</dbReference>
<dbReference type="GO" id="GO:0030027">
    <property type="term" value="C:lamellipodium"/>
    <property type="evidence" value="ECO:0007669"/>
    <property type="project" value="UniProtKB-SubCell"/>
</dbReference>
<dbReference type="GO" id="GO:0005634">
    <property type="term" value="C:nucleus"/>
    <property type="evidence" value="ECO:0000318"/>
    <property type="project" value="GO_Central"/>
</dbReference>
<dbReference type="GO" id="GO:0000932">
    <property type="term" value="C:P-body"/>
    <property type="evidence" value="ECO:0000250"/>
    <property type="project" value="UniProtKB"/>
</dbReference>
<dbReference type="GO" id="GO:0048471">
    <property type="term" value="C:perinuclear region of cytoplasm"/>
    <property type="evidence" value="ECO:0007669"/>
    <property type="project" value="UniProtKB-SubCell"/>
</dbReference>
<dbReference type="GO" id="GO:0003730">
    <property type="term" value="F:mRNA 3'-UTR binding"/>
    <property type="evidence" value="ECO:0000250"/>
    <property type="project" value="UniProtKB"/>
</dbReference>
<dbReference type="GO" id="GO:1990247">
    <property type="term" value="F:N6-methyladenosine-containing RNA reader activity"/>
    <property type="evidence" value="ECO:0000250"/>
    <property type="project" value="UniProtKB"/>
</dbReference>
<dbReference type="GO" id="GO:0070934">
    <property type="term" value="P:CRD-mediated mRNA stabilization"/>
    <property type="evidence" value="ECO:0000250"/>
    <property type="project" value="UniProtKB"/>
</dbReference>
<dbReference type="GO" id="GO:0051028">
    <property type="term" value="P:mRNA transport"/>
    <property type="evidence" value="ECO:0007669"/>
    <property type="project" value="UniProtKB-KW"/>
</dbReference>
<dbReference type="GO" id="GO:0007399">
    <property type="term" value="P:nervous system development"/>
    <property type="evidence" value="ECO:0000318"/>
    <property type="project" value="GO_Central"/>
</dbReference>
<dbReference type="GO" id="GO:0003407">
    <property type="term" value="P:neural retina development"/>
    <property type="evidence" value="ECO:0000315"/>
    <property type="project" value="ZFIN"/>
</dbReference>
<dbReference type="GO" id="GO:2000345">
    <property type="term" value="P:regulation of hepatocyte proliferation"/>
    <property type="evidence" value="ECO:0000315"/>
    <property type="project" value="ZFIN"/>
</dbReference>
<dbReference type="GO" id="GO:0006417">
    <property type="term" value="P:regulation of translation"/>
    <property type="evidence" value="ECO:0007669"/>
    <property type="project" value="UniProtKB-KW"/>
</dbReference>
<dbReference type="CDD" id="cd22490">
    <property type="entry name" value="KH-I_IGF2BP1_rpt1"/>
    <property type="match status" value="1"/>
</dbReference>
<dbReference type="CDD" id="cd22493">
    <property type="entry name" value="KH-I_IGF2BP1_rpt2"/>
    <property type="match status" value="1"/>
</dbReference>
<dbReference type="CDD" id="cd22496">
    <property type="entry name" value="KH-I_IGF2BP1_rpt3"/>
    <property type="match status" value="1"/>
</dbReference>
<dbReference type="CDD" id="cd22499">
    <property type="entry name" value="KH-I_IGF2BP1_rpt4"/>
    <property type="match status" value="1"/>
</dbReference>
<dbReference type="CDD" id="cd12625">
    <property type="entry name" value="RRM1_IGF2BP1"/>
    <property type="match status" value="1"/>
</dbReference>
<dbReference type="CDD" id="cd12630">
    <property type="entry name" value="RRM2_IGF2BP3"/>
    <property type="match status" value="1"/>
</dbReference>
<dbReference type="FunFam" id="3.30.70.330:FF:000203">
    <property type="entry name" value="insulin-like growth factor 2 mRNA-binding protein 1"/>
    <property type="match status" value="1"/>
</dbReference>
<dbReference type="FunFam" id="3.30.310.210:FF:000001">
    <property type="entry name" value="insulin-like growth factor 2 mRNA-binding protein 1 isoform X1"/>
    <property type="match status" value="1"/>
</dbReference>
<dbReference type="FunFam" id="3.30.1370.10:FF:000026">
    <property type="entry name" value="Insulin-like growth factor 2 mRNA-binding protein 3"/>
    <property type="match status" value="1"/>
</dbReference>
<dbReference type="FunFam" id="3.30.1370.10:FF:000027">
    <property type="entry name" value="insulin-like growth factor 2 mRNA-binding protein 3 isoform X1"/>
    <property type="match status" value="1"/>
</dbReference>
<dbReference type="FunFam" id="3.30.70.330:FF:000099">
    <property type="entry name" value="insulin-like growth factor 2 mRNA-binding protein 3 isoform X1"/>
    <property type="match status" value="1"/>
</dbReference>
<dbReference type="Gene3D" id="3.30.310.210">
    <property type="match status" value="1"/>
</dbReference>
<dbReference type="Gene3D" id="3.30.70.330">
    <property type="match status" value="2"/>
</dbReference>
<dbReference type="Gene3D" id="3.30.1370.10">
    <property type="entry name" value="K Homology domain, type 1"/>
    <property type="match status" value="2"/>
</dbReference>
<dbReference type="InterPro" id="IPR034837">
    <property type="entry name" value="IGF2BP1_RRM1"/>
</dbReference>
<dbReference type="InterPro" id="IPR004087">
    <property type="entry name" value="KH_dom"/>
</dbReference>
<dbReference type="InterPro" id="IPR004088">
    <property type="entry name" value="KH_dom_type_1"/>
</dbReference>
<dbReference type="InterPro" id="IPR036612">
    <property type="entry name" value="KH_dom_type_1_sf"/>
</dbReference>
<dbReference type="InterPro" id="IPR012677">
    <property type="entry name" value="Nucleotide-bd_a/b_plait_sf"/>
</dbReference>
<dbReference type="InterPro" id="IPR035979">
    <property type="entry name" value="RBD_domain_sf"/>
</dbReference>
<dbReference type="InterPro" id="IPR000504">
    <property type="entry name" value="RRM_dom"/>
</dbReference>
<dbReference type="PANTHER" id="PTHR10288">
    <property type="entry name" value="KH DOMAIN CONTAINING RNA BINDING PROTEIN"/>
    <property type="match status" value="1"/>
</dbReference>
<dbReference type="Pfam" id="PF00013">
    <property type="entry name" value="KH_1"/>
    <property type="match status" value="4"/>
</dbReference>
<dbReference type="Pfam" id="PF00076">
    <property type="entry name" value="RRM_1"/>
    <property type="match status" value="1"/>
</dbReference>
<dbReference type="SMART" id="SM00322">
    <property type="entry name" value="KH"/>
    <property type="match status" value="4"/>
</dbReference>
<dbReference type="SMART" id="SM00360">
    <property type="entry name" value="RRM"/>
    <property type="match status" value="2"/>
</dbReference>
<dbReference type="SUPFAM" id="SSF54791">
    <property type="entry name" value="Eukaryotic type KH-domain (KH-domain type I)"/>
    <property type="match status" value="4"/>
</dbReference>
<dbReference type="SUPFAM" id="SSF54928">
    <property type="entry name" value="RNA-binding domain, RBD"/>
    <property type="match status" value="1"/>
</dbReference>
<dbReference type="PROSITE" id="PS50084">
    <property type="entry name" value="KH_TYPE_1"/>
    <property type="match status" value="4"/>
</dbReference>
<dbReference type="PROSITE" id="PS50102">
    <property type="entry name" value="RRM"/>
    <property type="match status" value="2"/>
</dbReference>
<protein>
    <recommendedName>
        <fullName>Insulin-like growth factor 2 mRNA-binding protein 1</fullName>
        <shortName>IGF2 mRNA-binding protein 1</shortName>
        <shortName>IMP-1</shortName>
    </recommendedName>
    <alternativeName>
        <fullName>IGF-II mRNA-binding protein 1</fullName>
    </alternativeName>
    <alternativeName>
        <fullName>VICKZ family member 1</fullName>
    </alternativeName>
</protein>
<keyword id="KW-0966">Cell projection</keyword>
<keyword id="KW-0963">Cytoplasm</keyword>
<keyword id="KW-0509">mRNA transport</keyword>
<keyword id="KW-0539">Nucleus</keyword>
<keyword id="KW-0597">Phosphoprotein</keyword>
<keyword id="KW-1185">Reference proteome</keyword>
<keyword id="KW-0677">Repeat</keyword>
<keyword id="KW-0694">RNA-binding</keyword>
<keyword id="KW-0810">Translation regulation</keyword>
<keyword id="KW-0813">Transport</keyword>
<organism>
    <name type="scientific">Danio rerio</name>
    <name type="common">Zebrafish</name>
    <name type="synonym">Brachydanio rerio</name>
    <dbReference type="NCBI Taxonomy" id="7955"/>
    <lineage>
        <taxon>Eukaryota</taxon>
        <taxon>Metazoa</taxon>
        <taxon>Chordata</taxon>
        <taxon>Craniata</taxon>
        <taxon>Vertebrata</taxon>
        <taxon>Euteleostomi</taxon>
        <taxon>Actinopterygii</taxon>
        <taxon>Neopterygii</taxon>
        <taxon>Teleostei</taxon>
        <taxon>Ostariophysi</taxon>
        <taxon>Cypriniformes</taxon>
        <taxon>Danionidae</taxon>
        <taxon>Danioninae</taxon>
        <taxon>Danio</taxon>
    </lineage>
</organism>
<proteinExistence type="evidence at protein level"/>
<feature type="chain" id="PRO_0000282537" description="Insulin-like growth factor 2 mRNA-binding protein 1">
    <location>
        <begin position="1"/>
        <end position="598"/>
    </location>
</feature>
<feature type="domain" description="RRM 1" evidence="4">
    <location>
        <begin position="2"/>
        <end position="75"/>
    </location>
</feature>
<feature type="domain" description="RRM 2" evidence="4">
    <location>
        <begin position="81"/>
        <end position="156"/>
    </location>
</feature>
<feature type="domain" description="KH 1" evidence="3">
    <location>
        <begin position="198"/>
        <end position="263"/>
    </location>
</feature>
<feature type="domain" description="KH 2" evidence="3">
    <location>
        <begin position="279"/>
        <end position="346"/>
    </location>
</feature>
<feature type="domain" description="KH 3" evidence="3">
    <location>
        <begin position="407"/>
        <end position="472"/>
    </location>
</feature>
<feature type="domain" description="KH 4" evidence="3">
    <location>
        <begin position="489"/>
        <end position="555"/>
    </location>
</feature>
<feature type="region of interest" description="Disordered" evidence="5">
    <location>
        <begin position="155"/>
        <end position="195"/>
    </location>
</feature>
<feature type="region of interest" description="Disordered" evidence="5">
    <location>
        <begin position="561"/>
        <end position="598"/>
    </location>
</feature>
<feature type="compositionally biased region" description="Basic and acidic residues" evidence="5">
    <location>
        <begin position="162"/>
        <end position="171"/>
    </location>
</feature>
<feature type="compositionally biased region" description="Low complexity" evidence="5">
    <location>
        <begin position="574"/>
        <end position="583"/>
    </location>
</feature>
<feature type="modified residue" description="Phosphoserine" evidence="6">
    <location>
        <position position="185"/>
    </location>
</feature>
<feature type="modified residue" description="Phosphotyrosine" evidence="1">
    <location>
        <position position="399"/>
    </location>
</feature>
<feature type="modified residue" description="Phosphothreonine" evidence="6">
    <location>
        <position position="573"/>
    </location>
</feature>
<feature type="modified residue" description="Phosphothreonine" evidence="6">
    <location>
        <position position="583"/>
    </location>
</feature>
<feature type="modified residue" description="Phosphoserine" evidence="6">
    <location>
        <position position="587"/>
    </location>
</feature>
<reference key="1">
    <citation type="submission" date="2006-09" db="EMBL/GenBank/DDBJ databases">
        <authorList>
            <consortium name="NIH - Zebrafish Gene Collection (ZGC) project"/>
        </authorList>
    </citation>
    <scope>NUCLEOTIDE SEQUENCE [LARGE SCALE MRNA]</scope>
</reference>
<reference key="2">
    <citation type="journal article" date="2005" name="Biol. Cell">
        <title>VICKZ proteins: a multi-talented family of regulatory RNA-binding proteins.</title>
        <authorList>
            <person name="Yisraeli J.K."/>
        </authorList>
    </citation>
    <scope>REVIEW</scope>
</reference>
<reference key="3">
    <citation type="journal article" date="2008" name="J. Proteome Res.">
        <title>Online automated in vivo zebrafish phosphoproteomics: from large-scale analysis down to a single embryo.</title>
        <authorList>
            <person name="Lemeer S."/>
            <person name="Pinkse M.W.H."/>
            <person name="Mohammed S."/>
            <person name="van Breukelen B."/>
            <person name="den Hertog J."/>
            <person name="Slijper M."/>
            <person name="Heck A.J.R."/>
        </authorList>
    </citation>
    <scope>PHOSPHORYLATION [LARGE SCALE ANALYSIS] AT SER-185; THR-573; THR-583 AND SER-587</scope>
    <scope>IDENTIFICATION BY MASS SPECTROMETRY</scope>
    <source>
        <tissue>Embryo</tissue>
    </source>
</reference>